<dbReference type="EMBL" id="AE002160">
    <property type="protein sequence ID" value="AAF39179.1"/>
    <property type="status" value="ALT_INIT"/>
    <property type="molecule type" value="Genomic_DNA"/>
</dbReference>
<dbReference type="PIR" id="A81718">
    <property type="entry name" value="A81718"/>
</dbReference>
<dbReference type="RefSeq" id="WP_010230127.1">
    <property type="nucleotide sequence ID" value="NZ_CP063055.1"/>
</dbReference>
<dbReference type="SMR" id="Q9PKZ4"/>
<dbReference type="GeneID" id="1246357"/>
<dbReference type="KEGG" id="cmu:TC_0314"/>
<dbReference type="eggNOG" id="COG0629">
    <property type="taxonomic scope" value="Bacteria"/>
</dbReference>
<dbReference type="HOGENOM" id="CLU_1666266_0_0_0"/>
<dbReference type="OrthoDB" id="9809878at2"/>
<dbReference type="Proteomes" id="UP000000800">
    <property type="component" value="Chromosome"/>
</dbReference>
<dbReference type="GO" id="GO:0009295">
    <property type="term" value="C:nucleoid"/>
    <property type="evidence" value="ECO:0007669"/>
    <property type="project" value="TreeGrafter"/>
</dbReference>
<dbReference type="GO" id="GO:0003697">
    <property type="term" value="F:single-stranded DNA binding"/>
    <property type="evidence" value="ECO:0007669"/>
    <property type="project" value="UniProtKB-UniRule"/>
</dbReference>
<dbReference type="GO" id="GO:0006260">
    <property type="term" value="P:DNA replication"/>
    <property type="evidence" value="ECO:0007669"/>
    <property type="project" value="InterPro"/>
</dbReference>
<dbReference type="CDD" id="cd04496">
    <property type="entry name" value="SSB_OBF"/>
    <property type="match status" value="1"/>
</dbReference>
<dbReference type="Gene3D" id="2.40.50.140">
    <property type="entry name" value="Nucleic acid-binding proteins"/>
    <property type="match status" value="1"/>
</dbReference>
<dbReference type="HAMAP" id="MF_00984">
    <property type="entry name" value="SSB"/>
    <property type="match status" value="1"/>
</dbReference>
<dbReference type="InterPro" id="IPR012340">
    <property type="entry name" value="NA-bd_OB-fold"/>
</dbReference>
<dbReference type="InterPro" id="IPR000424">
    <property type="entry name" value="Primosome_PriB/ssb"/>
</dbReference>
<dbReference type="InterPro" id="IPR011344">
    <property type="entry name" value="ssDNA-bd"/>
</dbReference>
<dbReference type="NCBIfam" id="NF004948">
    <property type="entry name" value="PRK06293.1"/>
    <property type="match status" value="1"/>
</dbReference>
<dbReference type="NCBIfam" id="TIGR00621">
    <property type="entry name" value="ssb"/>
    <property type="match status" value="1"/>
</dbReference>
<dbReference type="PANTHER" id="PTHR10302">
    <property type="entry name" value="SINGLE-STRANDED DNA-BINDING PROTEIN"/>
    <property type="match status" value="1"/>
</dbReference>
<dbReference type="PANTHER" id="PTHR10302:SF27">
    <property type="entry name" value="SINGLE-STRANDED DNA-BINDING PROTEIN"/>
    <property type="match status" value="1"/>
</dbReference>
<dbReference type="Pfam" id="PF00436">
    <property type="entry name" value="SSB"/>
    <property type="match status" value="1"/>
</dbReference>
<dbReference type="SUPFAM" id="SSF50249">
    <property type="entry name" value="Nucleic acid-binding proteins"/>
    <property type="match status" value="1"/>
</dbReference>
<dbReference type="PROSITE" id="PS50935">
    <property type="entry name" value="SSB"/>
    <property type="match status" value="1"/>
</dbReference>
<keyword id="KW-0238">DNA-binding</keyword>
<proteinExistence type="inferred from homology"/>
<sequence length="157" mass="17265">MLFGYLVGFLAADPEERMTSGGKRVVVLRLGVKSRVGSKDETVWCRCNIWNNRYDKMIPYLKKGSSVIVAGELSVESYMGRDGSPQASISVSVDTLKFNSGSSRPESRGSDEGRQRSNDNVSLGFEGESLDTEIALDKEVYAGFGEDQQYASEDVPF</sequence>
<gene>
    <name type="primary">ssb</name>
    <name type="ordered locus">TC_0314</name>
</gene>
<protein>
    <recommendedName>
        <fullName evidence="1">Single-stranded DNA-binding protein</fullName>
        <shortName evidence="1">SSB</shortName>
    </recommendedName>
</protein>
<evidence type="ECO:0000255" key="1">
    <source>
        <dbReference type="HAMAP-Rule" id="MF_00984"/>
    </source>
</evidence>
<evidence type="ECO:0000256" key="2">
    <source>
        <dbReference type="SAM" id="MobiDB-lite"/>
    </source>
</evidence>
<evidence type="ECO:0000305" key="3"/>
<comment type="subunit">
    <text evidence="1">Homotetramer.</text>
</comment>
<comment type="sequence caution" evidence="3">
    <conflict type="erroneous initiation">
        <sequence resource="EMBL-CDS" id="AAF39179"/>
    </conflict>
</comment>
<feature type="chain" id="PRO_0000096023" description="Single-stranded DNA-binding protein">
    <location>
        <begin position="1"/>
        <end position="157"/>
    </location>
</feature>
<feature type="domain" description="SSB" evidence="1">
    <location>
        <begin position="1"/>
        <end position="100"/>
    </location>
</feature>
<feature type="region of interest" description="Disordered" evidence="2">
    <location>
        <begin position="97"/>
        <end position="126"/>
    </location>
</feature>
<feature type="compositionally biased region" description="Basic and acidic residues" evidence="2">
    <location>
        <begin position="105"/>
        <end position="117"/>
    </location>
</feature>
<organism>
    <name type="scientific">Chlamydia muridarum (strain MoPn / Nigg)</name>
    <dbReference type="NCBI Taxonomy" id="243161"/>
    <lineage>
        <taxon>Bacteria</taxon>
        <taxon>Pseudomonadati</taxon>
        <taxon>Chlamydiota</taxon>
        <taxon>Chlamydiia</taxon>
        <taxon>Chlamydiales</taxon>
        <taxon>Chlamydiaceae</taxon>
        <taxon>Chlamydia/Chlamydophila group</taxon>
        <taxon>Chlamydia</taxon>
    </lineage>
</organism>
<reference key="1">
    <citation type="journal article" date="2000" name="Nucleic Acids Res.">
        <title>Genome sequences of Chlamydia trachomatis MoPn and Chlamydia pneumoniae AR39.</title>
        <authorList>
            <person name="Read T.D."/>
            <person name="Brunham R.C."/>
            <person name="Shen C."/>
            <person name="Gill S.R."/>
            <person name="Heidelberg J.F."/>
            <person name="White O."/>
            <person name="Hickey E.K."/>
            <person name="Peterson J.D."/>
            <person name="Utterback T.R."/>
            <person name="Berry K.J."/>
            <person name="Bass S."/>
            <person name="Linher K.D."/>
            <person name="Weidman J.F."/>
            <person name="Khouri H.M."/>
            <person name="Craven B."/>
            <person name="Bowman C."/>
            <person name="Dodson R.J."/>
            <person name="Gwinn M.L."/>
            <person name="Nelson W.C."/>
            <person name="DeBoy R.T."/>
            <person name="Kolonay J.F."/>
            <person name="McClarty G."/>
            <person name="Salzberg S.L."/>
            <person name="Eisen J.A."/>
            <person name="Fraser C.M."/>
        </authorList>
    </citation>
    <scope>NUCLEOTIDE SEQUENCE [LARGE SCALE GENOMIC DNA]</scope>
    <source>
        <strain>MoPn / Nigg</strain>
    </source>
</reference>
<accession>Q9PKZ4</accession>
<name>SSB_CHLMU</name>